<sequence length="119" mass="13511">MNLAAYYPVLLFLLVGTGLGIALVSIGKLLGPNKPDVEKNAPYECGFEAFEDARMKFDVRYYLVAILFIIFDLETAFLFPWGVALRDIGWPGFIAMMIFLLEFLLGFAYIWKKGGLDWE</sequence>
<proteinExistence type="inferred from homology"/>
<keyword id="KW-0997">Cell inner membrane</keyword>
<keyword id="KW-1003">Cell membrane</keyword>
<keyword id="KW-0472">Membrane</keyword>
<keyword id="KW-0520">NAD</keyword>
<keyword id="KW-0874">Quinone</keyword>
<keyword id="KW-1278">Translocase</keyword>
<keyword id="KW-0812">Transmembrane</keyword>
<keyword id="KW-1133">Transmembrane helix</keyword>
<keyword id="KW-0813">Transport</keyword>
<keyword id="KW-0830">Ubiquinone</keyword>
<name>NUOA_BURO1</name>
<organism>
    <name type="scientific">Burkholderia orbicola (strain AU 1054)</name>
    <dbReference type="NCBI Taxonomy" id="331271"/>
    <lineage>
        <taxon>Bacteria</taxon>
        <taxon>Pseudomonadati</taxon>
        <taxon>Pseudomonadota</taxon>
        <taxon>Betaproteobacteria</taxon>
        <taxon>Burkholderiales</taxon>
        <taxon>Burkholderiaceae</taxon>
        <taxon>Burkholderia</taxon>
        <taxon>Burkholderia cepacia complex</taxon>
        <taxon>Burkholderia orbicola</taxon>
    </lineage>
</organism>
<reference key="1">
    <citation type="submission" date="2006-05" db="EMBL/GenBank/DDBJ databases">
        <title>Complete sequence of chromosome 1 of Burkholderia cenocepacia AU 1054.</title>
        <authorList>
            <consortium name="US DOE Joint Genome Institute"/>
            <person name="Copeland A."/>
            <person name="Lucas S."/>
            <person name="Lapidus A."/>
            <person name="Barry K."/>
            <person name="Detter J.C."/>
            <person name="Glavina del Rio T."/>
            <person name="Hammon N."/>
            <person name="Israni S."/>
            <person name="Dalin E."/>
            <person name="Tice H."/>
            <person name="Pitluck S."/>
            <person name="Chain P."/>
            <person name="Malfatti S."/>
            <person name="Shin M."/>
            <person name="Vergez L."/>
            <person name="Schmutz J."/>
            <person name="Larimer F."/>
            <person name="Land M."/>
            <person name="Hauser L."/>
            <person name="Kyrpides N."/>
            <person name="Lykidis A."/>
            <person name="LiPuma J.J."/>
            <person name="Konstantinidis K."/>
            <person name="Tiedje J.M."/>
            <person name="Richardson P."/>
        </authorList>
    </citation>
    <scope>NUCLEOTIDE SEQUENCE [LARGE SCALE GENOMIC DNA]</scope>
    <source>
        <strain>AU 1054</strain>
    </source>
</reference>
<comment type="function">
    <text evidence="1">NDH-1 shuttles electrons from NADH, via FMN and iron-sulfur (Fe-S) centers, to quinones in the respiratory chain. The immediate electron acceptor for the enzyme in this species is believed to be ubiquinone. Couples the redox reaction to proton translocation (for every two electrons transferred, four hydrogen ions are translocated across the cytoplasmic membrane), and thus conserves the redox energy in a proton gradient.</text>
</comment>
<comment type="catalytic activity">
    <reaction evidence="1">
        <text>a quinone + NADH + 5 H(+)(in) = a quinol + NAD(+) + 4 H(+)(out)</text>
        <dbReference type="Rhea" id="RHEA:57888"/>
        <dbReference type="ChEBI" id="CHEBI:15378"/>
        <dbReference type="ChEBI" id="CHEBI:24646"/>
        <dbReference type="ChEBI" id="CHEBI:57540"/>
        <dbReference type="ChEBI" id="CHEBI:57945"/>
        <dbReference type="ChEBI" id="CHEBI:132124"/>
    </reaction>
</comment>
<comment type="subunit">
    <text evidence="1">NDH-1 is composed of 14 different subunits. Subunits NuoA, H, J, K, L, M, N constitute the membrane sector of the complex.</text>
</comment>
<comment type="subcellular location">
    <subcellularLocation>
        <location evidence="1">Cell inner membrane</location>
        <topology evidence="1">Multi-pass membrane protein</topology>
    </subcellularLocation>
</comment>
<comment type="similarity">
    <text evidence="1">Belongs to the complex I subunit 3 family.</text>
</comment>
<feature type="chain" id="PRO_0000362635" description="NADH-quinone oxidoreductase subunit A">
    <location>
        <begin position="1"/>
        <end position="119"/>
    </location>
</feature>
<feature type="transmembrane region" description="Helical" evidence="1">
    <location>
        <begin position="7"/>
        <end position="27"/>
    </location>
</feature>
<feature type="transmembrane region" description="Helical" evidence="1">
    <location>
        <begin position="63"/>
        <end position="83"/>
    </location>
</feature>
<feature type="transmembrane region" description="Helical" evidence="1">
    <location>
        <begin position="88"/>
        <end position="108"/>
    </location>
</feature>
<dbReference type="EC" id="7.1.1.-" evidence="1"/>
<dbReference type="EMBL" id="CP000378">
    <property type="protein sequence ID" value="ABF76542.1"/>
    <property type="molecule type" value="Genomic_DNA"/>
</dbReference>
<dbReference type="SMR" id="Q1BV13"/>
<dbReference type="HOGENOM" id="CLU_119549_3_1_4"/>
<dbReference type="GO" id="GO:0030964">
    <property type="term" value="C:NADH dehydrogenase complex"/>
    <property type="evidence" value="ECO:0007669"/>
    <property type="project" value="TreeGrafter"/>
</dbReference>
<dbReference type="GO" id="GO:0005886">
    <property type="term" value="C:plasma membrane"/>
    <property type="evidence" value="ECO:0007669"/>
    <property type="project" value="UniProtKB-SubCell"/>
</dbReference>
<dbReference type="GO" id="GO:0008137">
    <property type="term" value="F:NADH dehydrogenase (ubiquinone) activity"/>
    <property type="evidence" value="ECO:0007669"/>
    <property type="project" value="InterPro"/>
</dbReference>
<dbReference type="GO" id="GO:0050136">
    <property type="term" value="F:NADH:ubiquinone reductase (non-electrogenic) activity"/>
    <property type="evidence" value="ECO:0007669"/>
    <property type="project" value="UniProtKB-UniRule"/>
</dbReference>
<dbReference type="GO" id="GO:0048038">
    <property type="term" value="F:quinone binding"/>
    <property type="evidence" value="ECO:0007669"/>
    <property type="project" value="UniProtKB-KW"/>
</dbReference>
<dbReference type="FunFam" id="1.20.58.1610:FF:000004">
    <property type="entry name" value="NADH-quinone oxidoreductase subunit A"/>
    <property type="match status" value="1"/>
</dbReference>
<dbReference type="Gene3D" id="1.20.58.1610">
    <property type="entry name" value="NADH:ubiquinone/plastoquinone oxidoreductase, chain 3"/>
    <property type="match status" value="1"/>
</dbReference>
<dbReference type="HAMAP" id="MF_01394">
    <property type="entry name" value="NDH1_NuoA"/>
    <property type="match status" value="1"/>
</dbReference>
<dbReference type="InterPro" id="IPR023043">
    <property type="entry name" value="NAD(P)H_OxRDtase_bac/plastid"/>
</dbReference>
<dbReference type="InterPro" id="IPR000440">
    <property type="entry name" value="NADH_UbQ/plastoQ_OxRdtase_su3"/>
</dbReference>
<dbReference type="InterPro" id="IPR038430">
    <property type="entry name" value="NDAH_ubi_oxred_su3_sf"/>
</dbReference>
<dbReference type="PANTHER" id="PTHR11058">
    <property type="entry name" value="NADH-UBIQUINONE OXIDOREDUCTASE CHAIN 3"/>
    <property type="match status" value="1"/>
</dbReference>
<dbReference type="PANTHER" id="PTHR11058:SF9">
    <property type="entry name" value="NADH-UBIQUINONE OXIDOREDUCTASE CHAIN 3"/>
    <property type="match status" value="1"/>
</dbReference>
<dbReference type="Pfam" id="PF00507">
    <property type="entry name" value="Oxidored_q4"/>
    <property type="match status" value="1"/>
</dbReference>
<gene>
    <name evidence="1" type="primary">nuoA</name>
    <name type="ordered locus">Bcen_1637</name>
</gene>
<evidence type="ECO:0000255" key="1">
    <source>
        <dbReference type="HAMAP-Rule" id="MF_01394"/>
    </source>
</evidence>
<protein>
    <recommendedName>
        <fullName evidence="1">NADH-quinone oxidoreductase subunit A</fullName>
        <ecNumber evidence="1">7.1.1.-</ecNumber>
    </recommendedName>
    <alternativeName>
        <fullName evidence="1">NADH dehydrogenase I subunit A</fullName>
    </alternativeName>
    <alternativeName>
        <fullName evidence="1">NDH-1 subunit A</fullName>
    </alternativeName>
    <alternativeName>
        <fullName evidence="1">NUO1</fullName>
    </alternativeName>
</protein>
<accession>Q1BV13</accession>